<sequence length="370" mass="41836">MKKKKDEELTPWAKYQKEHNANSRSRFKRKRKATSKNPREPQASFRRNNRNKVKKSNKKGTKRIVKEQRLSRQKLGILIGSTLIVIALFFGYFYSSISRVQKFSVSGNKRVSTAKILKNVSIKKNDVILTSIFKEGKFENNLLKKNTDIKDATVSISWSGKVKIKVKENAVMGYVIRNKTYYTVKQDGSVVRKSVSQPSSDYPIFRNFQENSTLKKFLKEYAQMPNSVQNDVAEVDFSPTKNVKDRLHFFMNDGNQVYAIMSTFAKKMKYYPEISASMKERGMVDLQVGAFSRPSGWTDEAKAASESSKSAESSSKAKKQEKTTQNSESADSTSASADSTETINSASSQSKEDLESSNAESTVNTQQDID</sequence>
<evidence type="ECO:0000255" key="1">
    <source>
        <dbReference type="HAMAP-Rule" id="MF_00912"/>
    </source>
</evidence>
<evidence type="ECO:0000255" key="2">
    <source>
        <dbReference type="PROSITE-ProRule" id="PRU01115"/>
    </source>
</evidence>
<evidence type="ECO:0000256" key="3">
    <source>
        <dbReference type="SAM" id="MobiDB-lite"/>
    </source>
</evidence>
<accession>Q03EY3</accession>
<reference key="1">
    <citation type="journal article" date="2006" name="Proc. Natl. Acad. Sci. U.S.A.">
        <title>Comparative genomics of the lactic acid bacteria.</title>
        <authorList>
            <person name="Makarova K.S."/>
            <person name="Slesarev A."/>
            <person name="Wolf Y.I."/>
            <person name="Sorokin A."/>
            <person name="Mirkin B."/>
            <person name="Koonin E.V."/>
            <person name="Pavlov A."/>
            <person name="Pavlova N."/>
            <person name="Karamychev V."/>
            <person name="Polouchine N."/>
            <person name="Shakhova V."/>
            <person name="Grigoriev I."/>
            <person name="Lou Y."/>
            <person name="Rohksar D."/>
            <person name="Lucas S."/>
            <person name="Huang K."/>
            <person name="Goodstein D.M."/>
            <person name="Hawkins T."/>
            <person name="Plengvidhya V."/>
            <person name="Welker D."/>
            <person name="Hughes J."/>
            <person name="Goh Y."/>
            <person name="Benson A."/>
            <person name="Baldwin K."/>
            <person name="Lee J.-H."/>
            <person name="Diaz-Muniz I."/>
            <person name="Dosti B."/>
            <person name="Smeianov V."/>
            <person name="Wechter W."/>
            <person name="Barabote R."/>
            <person name="Lorca G."/>
            <person name="Altermann E."/>
            <person name="Barrangou R."/>
            <person name="Ganesan B."/>
            <person name="Xie Y."/>
            <person name="Rawsthorne H."/>
            <person name="Tamir D."/>
            <person name="Parker C."/>
            <person name="Breidt F."/>
            <person name="Broadbent J.R."/>
            <person name="Hutkins R."/>
            <person name="O'Sullivan D."/>
            <person name="Steele J."/>
            <person name="Unlu G."/>
            <person name="Saier M.H. Jr."/>
            <person name="Klaenhammer T."/>
            <person name="Richardson P."/>
            <person name="Kozyavkin S."/>
            <person name="Weimer B.C."/>
            <person name="Mills D.A."/>
        </authorList>
    </citation>
    <scope>NUCLEOTIDE SEQUENCE [LARGE SCALE GENOMIC DNA]</scope>
    <source>
        <strain>ATCC 25745 / CCUG 21536 / LMG 10740 / 183-1w</strain>
    </source>
</reference>
<organism>
    <name type="scientific">Pediococcus pentosaceus (strain ATCC 25745 / CCUG 21536 / LMG 10740 / 183-1w)</name>
    <dbReference type="NCBI Taxonomy" id="278197"/>
    <lineage>
        <taxon>Bacteria</taxon>
        <taxon>Bacillati</taxon>
        <taxon>Bacillota</taxon>
        <taxon>Bacilli</taxon>
        <taxon>Lactobacillales</taxon>
        <taxon>Lactobacillaceae</taxon>
        <taxon>Pediococcus</taxon>
    </lineage>
</organism>
<comment type="function">
    <text evidence="1">Cell division protein that may be involved in stabilizing or promoting the assembly of the division complex.</text>
</comment>
<comment type="subcellular location">
    <subcellularLocation>
        <location evidence="1">Cell membrane</location>
        <topology evidence="1">Single-pass type II membrane protein</topology>
    </subcellularLocation>
    <text evidence="1">Localizes to the division septum.</text>
</comment>
<comment type="similarity">
    <text evidence="1">Belongs to the FtsQ/DivIB family. DivIB subfamily.</text>
</comment>
<proteinExistence type="inferred from homology"/>
<dbReference type="EMBL" id="CP000422">
    <property type="protein sequence ID" value="ABJ68239.1"/>
    <property type="molecule type" value="Genomic_DNA"/>
</dbReference>
<dbReference type="RefSeq" id="WP_011673541.1">
    <property type="nucleotide sequence ID" value="NC_008525.1"/>
</dbReference>
<dbReference type="STRING" id="278197.PEPE_1185"/>
<dbReference type="GeneID" id="33062175"/>
<dbReference type="KEGG" id="ppe:PEPE_1185"/>
<dbReference type="eggNOG" id="COG1589">
    <property type="taxonomic scope" value="Bacteria"/>
</dbReference>
<dbReference type="HOGENOM" id="CLU_046278_0_1_9"/>
<dbReference type="OrthoDB" id="1819027at2"/>
<dbReference type="Proteomes" id="UP000000773">
    <property type="component" value="Chromosome"/>
</dbReference>
<dbReference type="GO" id="GO:0032153">
    <property type="term" value="C:cell division site"/>
    <property type="evidence" value="ECO:0007669"/>
    <property type="project" value="UniProtKB-UniRule"/>
</dbReference>
<dbReference type="GO" id="GO:0005886">
    <property type="term" value="C:plasma membrane"/>
    <property type="evidence" value="ECO:0007669"/>
    <property type="project" value="UniProtKB-SubCell"/>
</dbReference>
<dbReference type="GO" id="GO:0043093">
    <property type="term" value="P:FtsZ-dependent cytokinesis"/>
    <property type="evidence" value="ECO:0007669"/>
    <property type="project" value="UniProtKB-UniRule"/>
</dbReference>
<dbReference type="Gene3D" id="3.40.50.10960">
    <property type="match status" value="1"/>
</dbReference>
<dbReference type="HAMAP" id="MF_00912">
    <property type="entry name" value="DivIB"/>
    <property type="match status" value="1"/>
</dbReference>
<dbReference type="InterPro" id="IPR005548">
    <property type="entry name" value="Cell_div_FtsQ/DivIB_C"/>
</dbReference>
<dbReference type="InterPro" id="IPR026580">
    <property type="entry name" value="DivIB"/>
</dbReference>
<dbReference type="InterPro" id="IPR050487">
    <property type="entry name" value="FtsQ_DivIB"/>
</dbReference>
<dbReference type="InterPro" id="IPR034746">
    <property type="entry name" value="POTRA"/>
</dbReference>
<dbReference type="InterPro" id="IPR013685">
    <property type="entry name" value="POTRA_FtsQ_type"/>
</dbReference>
<dbReference type="PANTHER" id="PTHR37820">
    <property type="entry name" value="CELL DIVISION PROTEIN DIVIB"/>
    <property type="match status" value="1"/>
</dbReference>
<dbReference type="PANTHER" id="PTHR37820:SF1">
    <property type="entry name" value="CELL DIVISION PROTEIN FTSQ"/>
    <property type="match status" value="1"/>
</dbReference>
<dbReference type="Pfam" id="PF03799">
    <property type="entry name" value="FtsQ_DivIB_C"/>
    <property type="match status" value="1"/>
</dbReference>
<dbReference type="Pfam" id="PF08478">
    <property type="entry name" value="POTRA_1"/>
    <property type="match status" value="1"/>
</dbReference>
<dbReference type="PROSITE" id="PS51779">
    <property type="entry name" value="POTRA"/>
    <property type="match status" value="1"/>
</dbReference>
<protein>
    <recommendedName>
        <fullName evidence="1">Cell division protein DivIB</fullName>
    </recommendedName>
</protein>
<gene>
    <name evidence="1" type="primary">divIB</name>
    <name type="ordered locus">PEPE_1185</name>
</gene>
<name>DIVIB_PEDPA</name>
<feature type="chain" id="PRO_0000414783" description="Cell division protein DivIB">
    <location>
        <begin position="1"/>
        <end position="370"/>
    </location>
</feature>
<feature type="topological domain" description="Cytoplasmic" evidence="1">
    <location>
        <begin position="1"/>
        <end position="74"/>
    </location>
</feature>
<feature type="transmembrane region" description="Helical" evidence="1">
    <location>
        <begin position="75"/>
        <end position="95"/>
    </location>
</feature>
<feature type="topological domain" description="Extracellular" evidence="1">
    <location>
        <begin position="96"/>
        <end position="370"/>
    </location>
</feature>
<feature type="domain" description="POTRA" evidence="2">
    <location>
        <begin position="98"/>
        <end position="169"/>
    </location>
</feature>
<feature type="region of interest" description="Disordered" evidence="3">
    <location>
        <begin position="1"/>
        <end position="65"/>
    </location>
</feature>
<feature type="region of interest" description="Disordered" evidence="3">
    <location>
        <begin position="295"/>
        <end position="370"/>
    </location>
</feature>
<feature type="compositionally biased region" description="Basic residues" evidence="3">
    <location>
        <begin position="25"/>
        <end position="34"/>
    </location>
</feature>
<feature type="compositionally biased region" description="Basic residues" evidence="3">
    <location>
        <begin position="47"/>
        <end position="63"/>
    </location>
</feature>
<feature type="compositionally biased region" description="Low complexity" evidence="3">
    <location>
        <begin position="304"/>
        <end position="314"/>
    </location>
</feature>
<feature type="compositionally biased region" description="Low complexity" evidence="3">
    <location>
        <begin position="327"/>
        <end position="342"/>
    </location>
</feature>
<feature type="compositionally biased region" description="Polar residues" evidence="3">
    <location>
        <begin position="356"/>
        <end position="370"/>
    </location>
</feature>
<keyword id="KW-0131">Cell cycle</keyword>
<keyword id="KW-0132">Cell division</keyword>
<keyword id="KW-1003">Cell membrane</keyword>
<keyword id="KW-0472">Membrane</keyword>
<keyword id="KW-0812">Transmembrane</keyword>
<keyword id="KW-1133">Transmembrane helix</keyword>